<reference key="1">
    <citation type="journal article" date="1996" name="Nucleic Acids Res.">
        <title>Complete sequence analysis of the genome of the bacterium Mycoplasma pneumoniae.</title>
        <authorList>
            <person name="Himmelreich R."/>
            <person name="Hilbert H."/>
            <person name="Plagens H."/>
            <person name="Pirkl E."/>
            <person name="Li B.-C."/>
            <person name="Herrmann R."/>
        </authorList>
    </citation>
    <scope>NUCLEOTIDE SEQUENCE [LARGE SCALE GENOMIC DNA]</scope>
    <source>
        <strain>ATCC 29342 / M129 / Subtype 1</strain>
    </source>
</reference>
<keyword id="KW-0067">ATP-binding</keyword>
<keyword id="KW-0143">Chaperone</keyword>
<keyword id="KW-0547">Nucleotide-binding</keyword>
<keyword id="KW-0597">Phosphoprotein</keyword>
<keyword id="KW-1185">Reference proteome</keyword>
<keyword id="KW-0346">Stress response</keyword>
<name>DNAK_MYCPN</name>
<dbReference type="EMBL" id="U00089">
    <property type="protein sequence ID" value="AAB96055.1"/>
    <property type="molecule type" value="Genomic_DNA"/>
</dbReference>
<dbReference type="PIR" id="S73733">
    <property type="entry name" value="S73733"/>
</dbReference>
<dbReference type="RefSeq" id="NP_110122.1">
    <property type="nucleotide sequence ID" value="NC_000912.1"/>
</dbReference>
<dbReference type="RefSeq" id="WP_010874790.1">
    <property type="nucleotide sequence ID" value="NZ_OU342337.1"/>
</dbReference>
<dbReference type="SMR" id="P75344"/>
<dbReference type="IntAct" id="P75344">
    <property type="interactions" value="18"/>
</dbReference>
<dbReference type="STRING" id="272634.MPN_434"/>
<dbReference type="EnsemblBacteria" id="AAB96055">
    <property type="protein sequence ID" value="AAB96055"/>
    <property type="gene ID" value="MPN_434"/>
</dbReference>
<dbReference type="GeneID" id="66608899"/>
<dbReference type="KEGG" id="mpn:MPN_434"/>
<dbReference type="PATRIC" id="fig|272634.6.peg.469"/>
<dbReference type="HOGENOM" id="CLU_005965_2_1_14"/>
<dbReference type="OrthoDB" id="9766019at2"/>
<dbReference type="BioCyc" id="MPNE272634:G1GJ3-701-MONOMER"/>
<dbReference type="Proteomes" id="UP000000808">
    <property type="component" value="Chromosome"/>
</dbReference>
<dbReference type="GO" id="GO:0005524">
    <property type="term" value="F:ATP binding"/>
    <property type="evidence" value="ECO:0007669"/>
    <property type="project" value="UniProtKB-UniRule"/>
</dbReference>
<dbReference type="GO" id="GO:0140662">
    <property type="term" value="F:ATP-dependent protein folding chaperone"/>
    <property type="evidence" value="ECO:0007669"/>
    <property type="project" value="InterPro"/>
</dbReference>
<dbReference type="GO" id="GO:0051082">
    <property type="term" value="F:unfolded protein binding"/>
    <property type="evidence" value="ECO:0007669"/>
    <property type="project" value="InterPro"/>
</dbReference>
<dbReference type="CDD" id="cd10234">
    <property type="entry name" value="ASKHA_NBD_HSP70_DnaK-like"/>
    <property type="match status" value="1"/>
</dbReference>
<dbReference type="FunFam" id="2.60.34.10:FF:000014">
    <property type="entry name" value="Chaperone protein DnaK HSP70"/>
    <property type="match status" value="1"/>
</dbReference>
<dbReference type="FunFam" id="3.30.420.40:FF:000071">
    <property type="entry name" value="Molecular chaperone DnaK"/>
    <property type="match status" value="1"/>
</dbReference>
<dbReference type="FunFam" id="3.90.640.10:FF:000003">
    <property type="entry name" value="Molecular chaperone DnaK"/>
    <property type="match status" value="1"/>
</dbReference>
<dbReference type="Gene3D" id="3.30.420.40">
    <property type="match status" value="2"/>
</dbReference>
<dbReference type="Gene3D" id="3.90.640.10">
    <property type="entry name" value="Actin, Chain A, domain 4"/>
    <property type="match status" value="1"/>
</dbReference>
<dbReference type="Gene3D" id="2.60.34.10">
    <property type="entry name" value="Substrate Binding Domain Of DNAk, Chain A, domain 1"/>
    <property type="match status" value="1"/>
</dbReference>
<dbReference type="HAMAP" id="MF_00332">
    <property type="entry name" value="DnaK"/>
    <property type="match status" value="1"/>
</dbReference>
<dbReference type="InterPro" id="IPR043129">
    <property type="entry name" value="ATPase_NBD"/>
</dbReference>
<dbReference type="InterPro" id="IPR012725">
    <property type="entry name" value="Chaperone_DnaK"/>
</dbReference>
<dbReference type="InterPro" id="IPR018181">
    <property type="entry name" value="Heat_shock_70_CS"/>
</dbReference>
<dbReference type="InterPro" id="IPR029047">
    <property type="entry name" value="HSP70_peptide-bd_sf"/>
</dbReference>
<dbReference type="InterPro" id="IPR013126">
    <property type="entry name" value="Hsp_70_fam"/>
</dbReference>
<dbReference type="NCBIfam" id="NF001413">
    <property type="entry name" value="PRK00290.1"/>
    <property type="match status" value="1"/>
</dbReference>
<dbReference type="NCBIfam" id="TIGR02350">
    <property type="entry name" value="prok_dnaK"/>
    <property type="match status" value="1"/>
</dbReference>
<dbReference type="PANTHER" id="PTHR19375">
    <property type="entry name" value="HEAT SHOCK PROTEIN 70KDA"/>
    <property type="match status" value="1"/>
</dbReference>
<dbReference type="Pfam" id="PF00012">
    <property type="entry name" value="HSP70"/>
    <property type="match status" value="1"/>
</dbReference>
<dbReference type="PRINTS" id="PR00301">
    <property type="entry name" value="HEATSHOCK70"/>
</dbReference>
<dbReference type="SUPFAM" id="SSF53067">
    <property type="entry name" value="Actin-like ATPase domain"/>
    <property type="match status" value="2"/>
</dbReference>
<dbReference type="SUPFAM" id="SSF100920">
    <property type="entry name" value="Heat shock protein 70kD (HSP70), peptide-binding domain"/>
    <property type="match status" value="1"/>
</dbReference>
<dbReference type="PROSITE" id="PS00297">
    <property type="entry name" value="HSP70_1"/>
    <property type="match status" value="1"/>
</dbReference>
<dbReference type="PROSITE" id="PS00329">
    <property type="entry name" value="HSP70_2"/>
    <property type="match status" value="1"/>
</dbReference>
<dbReference type="PROSITE" id="PS01036">
    <property type="entry name" value="HSP70_3"/>
    <property type="match status" value="1"/>
</dbReference>
<organism>
    <name type="scientific">Mycoplasma pneumoniae (strain ATCC 29342 / M129 / Subtype 1)</name>
    <name type="common">Mycoplasmoides pneumoniae</name>
    <dbReference type="NCBI Taxonomy" id="272634"/>
    <lineage>
        <taxon>Bacteria</taxon>
        <taxon>Bacillati</taxon>
        <taxon>Mycoplasmatota</taxon>
        <taxon>Mycoplasmoidales</taxon>
        <taxon>Mycoplasmoidaceae</taxon>
        <taxon>Mycoplasmoides</taxon>
    </lineage>
</organism>
<protein>
    <recommendedName>
        <fullName>Chaperone protein DnaK</fullName>
    </recommendedName>
    <alternativeName>
        <fullName>HSP70</fullName>
    </alternativeName>
    <alternativeName>
        <fullName>Heat shock 70 kDa protein</fullName>
    </alternativeName>
    <alternativeName>
        <fullName>Heat shock protein 70</fullName>
    </alternativeName>
</protein>
<sequence length="595" mass="65098">MSTDNGLIIGIDLGTTNSCVSVMENGRPVVLENPEGKRTTPSIVSYKNNEIIVGDAAKRQMVTNPNTIVSIKRLMGTSNKVTVKNPDGSTKELTPEEVSAQILSYLKDYAEKKIGKTISRAVITVPAYFNDAERNATKTAGKIAGLNVERIINEPTAAALAYGIDKSNREMKVLVYDLGGGTFDVSLLDIAEGTFEVLATAGDNRLGGDDWDNKIIEFILAHIAQEHNGLNLSNDKMAMQRLKEAAERAKIELSAQLEAIISLPFLTVTEKGPVNVELKLTRAKFEEITKQLLERTRNPISDVLREAKIKPEEINEILLVGGSTRMPAVQKLVESMVPGHSPNRSINPDEVVAIGAAIQGGVLRGDVKDVLLLDVTPLTLSIETLGGVATPLIKRNTTIPVSKSQIFSTAQDNQESVDVVVCQGERPMARDNKSLGRFNLGGIQPAPKGKPQIEITFSLDANGILNVKAKDLTTQKENSITISDNGNLSEEEIQKMIRDAEANKERDNVIRERIELRNEGESIVSTIKEILQSPEAKDFPKEEKEKLDKITGGIDAAIKANDYTKLKAEIENFKKWREEMAKKYNPNGDQGQPAQ</sequence>
<proteinExistence type="inferred from homology"/>
<feature type="chain" id="PRO_0000078496" description="Chaperone protein DnaK">
    <location>
        <begin position="1"/>
        <end position="595"/>
    </location>
</feature>
<feature type="modified residue" description="Phosphothreonine; by autocatalysis" evidence="1">
    <location>
        <position position="182"/>
    </location>
</feature>
<evidence type="ECO:0000250" key="1"/>
<evidence type="ECO:0000305" key="2"/>
<gene>
    <name type="primary">dnaK</name>
    <name type="synonym">hsp70</name>
    <name type="ordered locus">MPN_434</name>
    <name type="ORF">MP407</name>
</gene>
<accession>P75344</accession>
<comment type="function">
    <text evidence="1">Acts as a chaperone.</text>
</comment>
<comment type="induction">
    <text evidence="1">By stress conditions e.g. heat shock (By similarity).</text>
</comment>
<comment type="similarity">
    <text evidence="2">Belongs to the heat shock protein 70 family.</text>
</comment>